<feature type="chain" id="PRO_0000282375" description="Putative sensor histidine kinase NtrY-like">
    <location>
        <begin position="1"/>
        <end position="599"/>
    </location>
</feature>
<feature type="transmembrane region" description="Helical" evidence="2">
    <location>
        <begin position="17"/>
        <end position="37"/>
    </location>
</feature>
<feature type="transmembrane region" description="Helical" evidence="2">
    <location>
        <begin position="44"/>
        <end position="64"/>
    </location>
</feature>
<feature type="transmembrane region" description="Helical" evidence="2">
    <location>
        <begin position="85"/>
        <end position="105"/>
    </location>
</feature>
<feature type="transmembrane region" description="Helical" evidence="2">
    <location>
        <begin position="285"/>
        <end position="305"/>
    </location>
</feature>
<feature type="domain" description="HAMP" evidence="3">
    <location>
        <begin position="307"/>
        <end position="361"/>
    </location>
</feature>
<feature type="domain" description="Histidine kinase" evidence="4">
    <location>
        <begin position="378"/>
        <end position="589"/>
    </location>
</feature>
<feature type="modified residue" description="Phosphohistidine; by autocatalysis" evidence="4">
    <location>
        <position position="381"/>
    </location>
</feature>
<evidence type="ECO:0000250" key="1"/>
<evidence type="ECO:0000255" key="2"/>
<evidence type="ECO:0000255" key="3">
    <source>
        <dbReference type="PROSITE-ProRule" id="PRU00102"/>
    </source>
</evidence>
<evidence type="ECO:0000255" key="4">
    <source>
        <dbReference type="PROSITE-ProRule" id="PRU00107"/>
    </source>
</evidence>
<evidence type="ECO:0000305" key="5"/>
<accession>Q9ZCU7</accession>
<dbReference type="EC" id="2.7.13.3"/>
<dbReference type="EMBL" id="AJ235272">
    <property type="protein sequence ID" value="CAA15057.1"/>
    <property type="status" value="ALT_INIT"/>
    <property type="molecule type" value="Genomic_DNA"/>
</dbReference>
<dbReference type="PIR" id="G71666">
    <property type="entry name" value="G71666"/>
</dbReference>
<dbReference type="RefSeq" id="NP_220981.1">
    <property type="nucleotide sequence ID" value="NC_000963.1"/>
</dbReference>
<dbReference type="RefSeq" id="WP_004599164.1">
    <property type="nucleotide sequence ID" value="NC_000963.1"/>
</dbReference>
<dbReference type="SMR" id="Q9ZCU7"/>
<dbReference type="STRING" id="272947.gene:17555693"/>
<dbReference type="EnsemblBacteria" id="CAA15057">
    <property type="protein sequence ID" value="CAA15057"/>
    <property type="gene ID" value="CAA15057"/>
</dbReference>
<dbReference type="KEGG" id="rpr:RP614"/>
<dbReference type="PATRIC" id="fig|272947.5.peg.633"/>
<dbReference type="eggNOG" id="COG5000">
    <property type="taxonomic scope" value="Bacteria"/>
</dbReference>
<dbReference type="HOGENOM" id="CLU_019564_1_0_5"/>
<dbReference type="OrthoDB" id="9776727at2"/>
<dbReference type="Proteomes" id="UP000002480">
    <property type="component" value="Chromosome"/>
</dbReference>
<dbReference type="GO" id="GO:0005886">
    <property type="term" value="C:plasma membrane"/>
    <property type="evidence" value="ECO:0007669"/>
    <property type="project" value="UniProtKB-SubCell"/>
</dbReference>
<dbReference type="GO" id="GO:0005524">
    <property type="term" value="F:ATP binding"/>
    <property type="evidence" value="ECO:0007669"/>
    <property type="project" value="UniProtKB-KW"/>
</dbReference>
<dbReference type="GO" id="GO:0000155">
    <property type="term" value="F:phosphorelay sensor kinase activity"/>
    <property type="evidence" value="ECO:0007669"/>
    <property type="project" value="InterPro"/>
</dbReference>
<dbReference type="CDD" id="cd06225">
    <property type="entry name" value="HAMP"/>
    <property type="match status" value="1"/>
</dbReference>
<dbReference type="CDD" id="cd00082">
    <property type="entry name" value="HisKA"/>
    <property type="match status" value="1"/>
</dbReference>
<dbReference type="Gene3D" id="1.10.287.130">
    <property type="match status" value="1"/>
</dbReference>
<dbReference type="Gene3D" id="6.10.340.10">
    <property type="match status" value="1"/>
</dbReference>
<dbReference type="Gene3D" id="3.30.565.10">
    <property type="entry name" value="Histidine kinase-like ATPase, C-terminal domain"/>
    <property type="match status" value="1"/>
</dbReference>
<dbReference type="InterPro" id="IPR050398">
    <property type="entry name" value="Bact_Sensor_His_Kinase"/>
</dbReference>
<dbReference type="InterPro" id="IPR003660">
    <property type="entry name" value="HAMP_dom"/>
</dbReference>
<dbReference type="InterPro" id="IPR036890">
    <property type="entry name" value="HATPase_C_sf"/>
</dbReference>
<dbReference type="InterPro" id="IPR005467">
    <property type="entry name" value="His_kinase_dom"/>
</dbReference>
<dbReference type="InterPro" id="IPR003661">
    <property type="entry name" value="HisK_dim/P_dom"/>
</dbReference>
<dbReference type="InterPro" id="IPR036097">
    <property type="entry name" value="HisK_dim/P_sf"/>
</dbReference>
<dbReference type="InterPro" id="IPR045671">
    <property type="entry name" value="NtrY-like_N"/>
</dbReference>
<dbReference type="InterPro" id="IPR004358">
    <property type="entry name" value="Sig_transdc_His_kin-like_C"/>
</dbReference>
<dbReference type="PANTHER" id="PTHR45528">
    <property type="entry name" value="SENSOR HISTIDINE KINASE CPXA"/>
    <property type="match status" value="1"/>
</dbReference>
<dbReference type="PANTHER" id="PTHR45528:SF1">
    <property type="entry name" value="SENSOR HISTIDINE KINASE CPXA"/>
    <property type="match status" value="1"/>
</dbReference>
<dbReference type="Pfam" id="PF00672">
    <property type="entry name" value="HAMP"/>
    <property type="match status" value="1"/>
</dbReference>
<dbReference type="Pfam" id="PF02518">
    <property type="entry name" value="HATPase_c"/>
    <property type="match status" value="1"/>
</dbReference>
<dbReference type="Pfam" id="PF00512">
    <property type="entry name" value="HisKA"/>
    <property type="match status" value="1"/>
</dbReference>
<dbReference type="Pfam" id="PF19312">
    <property type="entry name" value="NtrY_N"/>
    <property type="match status" value="1"/>
</dbReference>
<dbReference type="PRINTS" id="PR00344">
    <property type="entry name" value="BCTRLSENSOR"/>
</dbReference>
<dbReference type="SMART" id="SM00304">
    <property type="entry name" value="HAMP"/>
    <property type="match status" value="1"/>
</dbReference>
<dbReference type="SMART" id="SM00387">
    <property type="entry name" value="HATPase_c"/>
    <property type="match status" value="1"/>
</dbReference>
<dbReference type="SMART" id="SM00388">
    <property type="entry name" value="HisKA"/>
    <property type="match status" value="1"/>
</dbReference>
<dbReference type="SUPFAM" id="SSF55874">
    <property type="entry name" value="ATPase domain of HSP90 chaperone/DNA topoisomerase II/histidine kinase"/>
    <property type="match status" value="1"/>
</dbReference>
<dbReference type="SUPFAM" id="SSF158472">
    <property type="entry name" value="HAMP domain-like"/>
    <property type="match status" value="1"/>
</dbReference>
<dbReference type="SUPFAM" id="SSF47384">
    <property type="entry name" value="Homodimeric domain of signal transducing histidine kinase"/>
    <property type="match status" value="1"/>
</dbReference>
<dbReference type="PROSITE" id="PS50885">
    <property type="entry name" value="HAMP"/>
    <property type="match status" value="1"/>
</dbReference>
<dbReference type="PROSITE" id="PS50109">
    <property type="entry name" value="HIS_KIN"/>
    <property type="match status" value="1"/>
</dbReference>
<name>NTRYL_RICPR</name>
<comment type="function">
    <text evidence="1">Member of the two-component regulatory system RP614/RP562.</text>
</comment>
<comment type="catalytic activity">
    <reaction>
        <text>ATP + protein L-histidine = ADP + protein N-phospho-L-histidine.</text>
        <dbReference type="EC" id="2.7.13.3"/>
    </reaction>
</comment>
<comment type="subcellular location">
    <subcellularLocation>
        <location evidence="5">Cell membrane</location>
        <topology evidence="5">Multi-pass membrane protein</topology>
    </subcellularLocation>
</comment>
<comment type="sequence caution" evidence="5">
    <conflict type="erroneous initiation">
        <sequence resource="EMBL-CDS" id="CAA15057"/>
    </conflict>
</comment>
<protein>
    <recommendedName>
        <fullName>Putative sensor histidine kinase NtrY-like</fullName>
        <ecNumber>2.7.13.3</ecNumber>
    </recommendedName>
</protein>
<keyword id="KW-0067">ATP-binding</keyword>
<keyword id="KW-1003">Cell membrane</keyword>
<keyword id="KW-0418">Kinase</keyword>
<keyword id="KW-0472">Membrane</keyword>
<keyword id="KW-0547">Nucleotide-binding</keyword>
<keyword id="KW-0597">Phosphoprotein</keyword>
<keyword id="KW-1185">Reference proteome</keyword>
<keyword id="KW-0808">Transferase</keyword>
<keyword id="KW-0812">Transmembrane</keyword>
<keyword id="KW-1133">Transmembrane helix</keyword>
<keyword id="KW-0902">Two-component regulatory system</keyword>
<organism>
    <name type="scientific">Rickettsia prowazekii (strain Madrid E)</name>
    <dbReference type="NCBI Taxonomy" id="272947"/>
    <lineage>
        <taxon>Bacteria</taxon>
        <taxon>Pseudomonadati</taxon>
        <taxon>Pseudomonadota</taxon>
        <taxon>Alphaproteobacteria</taxon>
        <taxon>Rickettsiales</taxon>
        <taxon>Rickettsiaceae</taxon>
        <taxon>Rickettsieae</taxon>
        <taxon>Rickettsia</taxon>
        <taxon>typhus group</taxon>
    </lineage>
</organism>
<proteinExistence type="inferred from homology"/>
<reference key="1">
    <citation type="journal article" date="1998" name="Nature">
        <title>The genome sequence of Rickettsia prowazekii and the origin of mitochondria.</title>
        <authorList>
            <person name="Andersson S.G.E."/>
            <person name="Zomorodipour A."/>
            <person name="Andersson J.O."/>
            <person name="Sicheritz-Ponten T."/>
            <person name="Alsmark U.C.M."/>
            <person name="Podowski R.M."/>
            <person name="Naeslund A.K."/>
            <person name="Eriksson A.-S."/>
            <person name="Winkler H.H."/>
            <person name="Kurland C.G."/>
        </authorList>
    </citation>
    <scope>NUCLEOTIDE SEQUENCE [LARGE SCALE GENOMIC DNA]</scope>
    <source>
        <strain>Madrid E</strain>
    </source>
</reference>
<sequence length="599" mass="67237">MLSDLKQNLRSYFSSRILILALAIASIISVCTTFYVISLEAKNFSTIIGFLLIDLAIFLILGILLTQKFFTKNNDNDSSKLQNRIVIAFSLVAAIPTIIVSVFSVYFFNLSVKAWFDKKISTVLDQSVIVAETYIAEHKVQLKETALAVAEDLSDMYYDLIHNPALFTKTLNTEADMRSLDEAIVLNKSTNTIVANSYLSFSLSFATIPAHLIKKADLGEPVEVKSDPTTIRMLIKLKEYNDVYLLVGRLVDNKIIDHIDATNGAAAEYNSLKNEIDNIQIKFSIMFIFIALLLLFVAINFGVLFTAKIVKPIKKLVTATDKVKDGDLTVQVPENEVDKDEIGTLYAAFNRMIKQLSRQQRDLVIAQRAMAWSDVAKKVAHEIKNPLTPILLASERLLKKFSSEINEKSEFESYLKMIIRHTNDIKNIVSEFVLFARLPAPKFTKSELVYLVKHIIEARKLLNDNIVYTYDSNVDQFDFMCDATQINQVMINVLKNAEESIEGQEFGKIDVILDAKDDFISVIVMDNGKGFPPELIGKATESYVTTSSKGMGVGLAIVKRIVEEHCGVLDIANREDEGAIIDIKFDLKELHLKVRRSGG</sequence>
<gene>
    <name type="ordered locus">RP614</name>
</gene>